<keyword id="KW-0025">Alternative splicing</keyword>
<keyword id="KW-0040">ANK repeat</keyword>
<keyword id="KW-0175">Coiled coil</keyword>
<keyword id="KW-0963">Cytoplasm</keyword>
<keyword id="KW-0251">Elongation factor</keyword>
<keyword id="KW-0648">Protein biosynthesis</keyword>
<keyword id="KW-1267">Proteomics identification</keyword>
<keyword id="KW-1185">Reference proteome</keyword>
<keyword id="KW-0677">Repeat</keyword>
<feature type="chain" id="PRO_0000248267" description="Ankyrin repeat and BTB/POZ domain-containing protein 1">
    <location>
        <begin position="1"/>
        <end position="478"/>
    </location>
</feature>
<feature type="repeat" description="ANK 1" evidence="1">
    <location>
        <begin position="1"/>
        <end position="31"/>
    </location>
</feature>
<feature type="repeat" description="ANK 2" evidence="1">
    <location>
        <begin position="35"/>
        <end position="64"/>
    </location>
</feature>
<feature type="domain" description="BTB 1" evidence="2">
    <location>
        <begin position="115"/>
        <end position="182"/>
    </location>
</feature>
<feature type="domain" description="BTB 2" evidence="2">
    <location>
        <begin position="272"/>
        <end position="346"/>
    </location>
</feature>
<feature type="coiled-coil region" evidence="1">
    <location>
        <begin position="451"/>
        <end position="477"/>
    </location>
</feature>
<feature type="splice variant" id="VSP_052148" description="In isoform 1." evidence="6 8">
    <location>
        <begin position="1"/>
        <end position="142"/>
    </location>
</feature>
<feature type="splice variant" id="VSP_052149" description="In isoform 3." evidence="6">
    <original>MDTSDLFASCRKGDVGRVRYLLEQRDVEVNVRDKWDSTPL</original>
    <variation>MWAECGTCWSSETWR</variation>
    <location>
        <begin position="1"/>
        <end position="40"/>
    </location>
</feature>
<feature type="splice variant" id="VSP_052150" description="In isoform 4." evidence="7">
    <location>
        <begin position="24"/>
        <end position="50"/>
    </location>
</feature>
<feature type="splice variant" id="VSP_052151" description="In isoform 4." evidence="7">
    <original>DYKQVTASCRRRDYYDDFLQRLLEQGIHSDVVFVVHGKPFRVHRCVLGARSAYFANMLDTKWKGKSVVVLRHPLINPVAFGALLQYLYTGRLDIGVEHVSDCERLAKQCQ</original>
    <variation>LCGHEE</variation>
    <location>
        <begin position="87"/>
        <end position="196"/>
    </location>
</feature>
<feature type="splice variant" id="VSP_052152" description="In isoform 4." evidence="7">
    <location>
        <begin position="255"/>
        <end position="287"/>
    </location>
</feature>
<feature type="splice variant" id="VSP_052153" description="In isoform 4." evidence="7">
    <original>EDLLVSIGLDC</original>
    <variation>LETSMCMRLCAALLPAPCTLRASWGVRGAQWGFSSLHEPGDPRGGSIWDEPPPPNAQASPQDPGGGHHSGKPGVGVGFGLSTFLLQIPPTHPSPKSSPLALA</variation>
    <location>
        <begin position="468"/>
        <end position="478"/>
    </location>
</feature>
<sequence length="478" mass="53979">MDTSDLFASCRKGDVGRVRYLLEQRDVEVNVRDKWDSTPLYYACLCGHEELVLYLLANGARCEANTFDGERCLYGALSDPIRRALRDYKQVTASCRRRDYYDDFLQRLLEQGIHSDVVFVVHGKPFRVHRCVLGARSAYFANMLDTKWKGKSVVVLRHPLINPVAFGALLQYLYTGRLDIGVEHVSDCERLAKQCQLWDLLSDLEAKCEKVSEFVASKPGTCVKVLTIEPPPADPRLREDMALLADCALPPELRGDLWELPFPCPDGFNSCPDICFRVAGCSFLCHKAFFCGRSDYFRALLDDHFRESEEPATSGGPPAVTLHGISPDVFTHVLYYMYSDHTELSPEAAYDVLSVADMYLLPGLKRLCGRSLAQMLDEDTVVGVWRVAKLFRLARLEDQCTEYMAKVIEKLVEREDFVEAVKEEAAAVAARQETDSIPLVDDIRFHVASTVQTYSAIEEAQQRLRALEDLLVSIGLDC</sequence>
<name>ABTB1_HUMAN</name>
<comment type="function">
    <text evidence="3 4">May act as a mediator of the PTEN growth-suppressive signaling pathway. May play a role in developmental processes.</text>
</comment>
<comment type="interaction">
    <interactant intactId="EBI-7223971">
        <id>Q969K4</id>
    </interactant>
    <interactant intactId="EBI-930964">
        <id>P54253</id>
        <label>ATXN1</label>
    </interactant>
    <organismsDiffer>false</organismsDiffer>
    <experiments>3</experiments>
</comment>
<comment type="interaction">
    <interactant intactId="EBI-7223971">
        <id>Q969K4</id>
    </interactant>
    <interactant intactId="EBI-456129">
        <id>Q13618</id>
        <label>CUL3</label>
    </interactant>
    <organismsDiffer>false</organismsDiffer>
    <experiments>5</experiments>
</comment>
<comment type="interaction">
    <interactant intactId="EBI-7223971">
        <id>Q969K4</id>
    </interactant>
    <interactant intactId="EBI-354943">
        <id>Q05639</id>
        <label>EEF1A2</label>
    </interactant>
    <organismsDiffer>false</organismsDiffer>
    <experiments>11</experiments>
</comment>
<comment type="interaction">
    <interactant intactId="EBI-7223971">
        <id>Q969K4</id>
    </interactant>
    <interactant intactId="EBI-358607">
        <id>P29692</id>
        <label>EEF1D</label>
    </interactant>
    <organismsDiffer>false</organismsDiffer>
    <experiments>3</experiments>
</comment>
<comment type="interaction">
    <interactant intactId="EBI-7223971">
        <id>Q969K4</id>
    </interactant>
    <interactant intactId="EBI-5280572">
        <id>P29692-2</id>
        <label>EEF1D</label>
    </interactant>
    <organismsDiffer>false</organismsDiffer>
    <experiments>4</experiments>
</comment>
<comment type="interaction">
    <interactant intactId="EBI-7223971">
        <id>Q969K4</id>
    </interactant>
    <interactant intactId="EBI-372899">
        <id>Q13148</id>
        <label>TARDBP</label>
    </interactant>
    <organismsDiffer>false</organismsDiffer>
    <experiments>3</experiments>
</comment>
<comment type="interaction">
    <interactant intactId="EBI-7223971">
        <id>Q969K4</id>
    </interactant>
    <interactant intactId="EBI-1051048">
        <id>Q9ULJ3</id>
        <label>ZBTB21</label>
    </interactant>
    <organismsDiffer>false</organismsDiffer>
    <experiments>3</experiments>
</comment>
<comment type="subcellular location">
    <subcellularLocation>
        <location evidence="4">Cytoplasm</location>
    </subcellularLocation>
</comment>
<comment type="alternative products">
    <event type="alternative splicing"/>
    <isoform>
        <id>Q969K4-1</id>
        <name evidence="3 4">2</name>
        <name evidence="4">BPOZ-2</name>
        <sequence type="displayed"/>
    </isoform>
    <isoform>
        <id>Q969K4-2</id>
        <name evidence="4">1</name>
        <name evidence="4">BPOZ-1</name>
        <sequence type="described" ref="VSP_052148"/>
    </isoform>
    <isoform>
        <id>Q969K4-3</id>
        <name evidence="4">3</name>
        <name evidence="4">BPOZ-3</name>
        <sequence type="described" ref="VSP_052149"/>
    </isoform>
    <isoform>
        <id>Q969K4-4</id>
        <name evidence="5">4</name>
        <sequence type="described" ref="VSP_052150 VSP_052151 VSP_052152 VSP_052153"/>
    </isoform>
</comment>
<comment type="tissue specificity">
    <text evidence="3">Ubiquitously expressed in all fetal tissues examined including heart, brain, liver, and kidney. Also expressed at lower levels in both adult heart and hypertrophic heart.</text>
</comment>
<comment type="sequence caution" evidence="9">
    <conflict type="frameshift">
        <sequence resource="EMBL-CDS" id="AAQ04661"/>
    </conflict>
</comment>
<reference evidence="9 16" key="1">
    <citation type="journal article" date="2000" name="Biochem. Biophys. Res. Commun.">
        <title>Molecular cloning and characterization of a novel human gene containing ankyrin repeat and double BTB/POZ domain.</title>
        <authorList>
            <person name="Dai K.-S."/>
            <person name="Wei W."/>
            <person name="Liew C.-C."/>
        </authorList>
    </citation>
    <scope>NUCLEOTIDE SEQUENCE [MRNA] (ISOFORM 2)</scope>
    <scope>FUNCTION</scope>
    <scope>TISSUE SPECIFICITY</scope>
    <source>
        <tissue evidence="3">Leukocyte</tissue>
    </source>
</reference>
<reference evidence="9 13" key="2">
    <citation type="journal article" date="2001" name="Oncogene">
        <title>Growth-suppressive effects of BPOZ and EGR2, two genes involved in the PTEN signaling pathway.</title>
        <authorList>
            <person name="Unoki M."/>
            <person name="Nakamura Y."/>
        </authorList>
    </citation>
    <scope>NUCLEOTIDE SEQUENCE [MRNA] (ISOFORMS 1; 2 AND 3)</scope>
    <scope>FUNCTION</scope>
    <scope>SUBCELLULAR LOCATION</scope>
</reference>
<reference key="3">
    <citation type="journal article" date="2004" name="Proc. Natl. Acad. Sci. U.S.A.">
        <title>Large-scale cDNA transfection screening for genes related to cancer development and progression.</title>
        <authorList>
            <person name="Wan D."/>
            <person name="Gong Y."/>
            <person name="Qin W."/>
            <person name="Zhang P."/>
            <person name="Li J."/>
            <person name="Wei L."/>
            <person name="Zhou X."/>
            <person name="Li H."/>
            <person name="Qiu X."/>
            <person name="Zhong F."/>
            <person name="He L."/>
            <person name="Yu J."/>
            <person name="Yao G."/>
            <person name="Jiang H."/>
            <person name="Qian L."/>
            <person name="Yu Y."/>
            <person name="Shu H."/>
            <person name="Chen X."/>
            <person name="Xu H."/>
            <person name="Guo M."/>
            <person name="Pan Z."/>
            <person name="Chen Y."/>
            <person name="Ge C."/>
            <person name="Yang S."/>
            <person name="Gu J."/>
        </authorList>
    </citation>
    <scope>NUCLEOTIDE SEQUENCE [LARGE SCALE MRNA] (ISOFORM 1)</scope>
</reference>
<reference evidence="9 14" key="4">
    <citation type="journal article" date="2004" name="Nat. Genet.">
        <title>Complete sequencing and characterization of 21,243 full-length human cDNAs.</title>
        <authorList>
            <person name="Ota T."/>
            <person name="Suzuki Y."/>
            <person name="Nishikawa T."/>
            <person name="Otsuki T."/>
            <person name="Sugiyama T."/>
            <person name="Irie R."/>
            <person name="Wakamatsu A."/>
            <person name="Hayashi K."/>
            <person name="Sato H."/>
            <person name="Nagai K."/>
            <person name="Kimura K."/>
            <person name="Makita H."/>
            <person name="Sekine M."/>
            <person name="Obayashi M."/>
            <person name="Nishi T."/>
            <person name="Shibahara T."/>
            <person name="Tanaka T."/>
            <person name="Ishii S."/>
            <person name="Yamamoto J."/>
            <person name="Saito K."/>
            <person name="Kawai Y."/>
            <person name="Isono Y."/>
            <person name="Nakamura Y."/>
            <person name="Nagahari K."/>
            <person name="Murakami K."/>
            <person name="Yasuda T."/>
            <person name="Iwayanagi T."/>
            <person name="Wagatsuma M."/>
            <person name="Shiratori A."/>
            <person name="Sudo H."/>
            <person name="Hosoiri T."/>
            <person name="Kaku Y."/>
            <person name="Kodaira H."/>
            <person name="Kondo H."/>
            <person name="Sugawara M."/>
            <person name="Takahashi M."/>
            <person name="Kanda K."/>
            <person name="Yokoi T."/>
            <person name="Furuya T."/>
            <person name="Kikkawa E."/>
            <person name="Omura Y."/>
            <person name="Abe K."/>
            <person name="Kamihara K."/>
            <person name="Katsuta N."/>
            <person name="Sato K."/>
            <person name="Tanikawa M."/>
            <person name="Yamazaki M."/>
            <person name="Ninomiya K."/>
            <person name="Ishibashi T."/>
            <person name="Yamashita H."/>
            <person name="Murakawa K."/>
            <person name="Fujimori K."/>
            <person name="Tanai H."/>
            <person name="Kimata M."/>
            <person name="Watanabe M."/>
            <person name="Hiraoka S."/>
            <person name="Chiba Y."/>
            <person name="Ishida S."/>
            <person name="Ono Y."/>
            <person name="Takiguchi S."/>
            <person name="Watanabe S."/>
            <person name="Yosida M."/>
            <person name="Hotuta T."/>
            <person name="Kusano J."/>
            <person name="Kanehori K."/>
            <person name="Takahashi-Fujii A."/>
            <person name="Hara H."/>
            <person name="Tanase T.-O."/>
            <person name="Nomura Y."/>
            <person name="Togiya S."/>
            <person name="Komai F."/>
            <person name="Hara R."/>
            <person name="Takeuchi K."/>
            <person name="Arita M."/>
            <person name="Imose N."/>
            <person name="Musashino K."/>
            <person name="Yuuki H."/>
            <person name="Oshima A."/>
            <person name="Sasaki N."/>
            <person name="Aotsuka S."/>
            <person name="Yoshikawa Y."/>
            <person name="Matsunawa H."/>
            <person name="Ichihara T."/>
            <person name="Shiohata N."/>
            <person name="Sano S."/>
            <person name="Moriya S."/>
            <person name="Momiyama H."/>
            <person name="Satoh N."/>
            <person name="Takami S."/>
            <person name="Terashima Y."/>
            <person name="Suzuki O."/>
            <person name="Nakagawa S."/>
            <person name="Senoh A."/>
            <person name="Mizoguchi H."/>
            <person name="Goto Y."/>
            <person name="Shimizu F."/>
            <person name="Wakebe H."/>
            <person name="Hishigaki H."/>
            <person name="Watanabe T."/>
            <person name="Sugiyama A."/>
            <person name="Takemoto M."/>
            <person name="Kawakami B."/>
            <person name="Yamazaki M."/>
            <person name="Watanabe K."/>
            <person name="Kumagai A."/>
            <person name="Itakura S."/>
            <person name="Fukuzumi Y."/>
            <person name="Fujimori Y."/>
            <person name="Komiyama M."/>
            <person name="Tashiro H."/>
            <person name="Tanigami A."/>
            <person name="Fujiwara T."/>
            <person name="Ono T."/>
            <person name="Yamada K."/>
            <person name="Fujii Y."/>
            <person name="Ozaki K."/>
            <person name="Hirao M."/>
            <person name="Ohmori Y."/>
            <person name="Kawabata A."/>
            <person name="Hikiji T."/>
            <person name="Kobatake N."/>
            <person name="Inagaki H."/>
            <person name="Ikema Y."/>
            <person name="Okamoto S."/>
            <person name="Okitani R."/>
            <person name="Kawakami T."/>
            <person name="Noguchi S."/>
            <person name="Itoh T."/>
            <person name="Shigeta K."/>
            <person name="Senba T."/>
            <person name="Matsumura K."/>
            <person name="Nakajima Y."/>
            <person name="Mizuno T."/>
            <person name="Morinaga M."/>
            <person name="Sasaki M."/>
            <person name="Togashi T."/>
            <person name="Oyama M."/>
            <person name="Hata H."/>
            <person name="Watanabe M."/>
            <person name="Komatsu T."/>
            <person name="Mizushima-Sugano J."/>
            <person name="Satoh T."/>
            <person name="Shirai Y."/>
            <person name="Takahashi Y."/>
            <person name="Nakagawa K."/>
            <person name="Okumura K."/>
            <person name="Nagase T."/>
            <person name="Nomura N."/>
            <person name="Kikuchi H."/>
            <person name="Masuho Y."/>
            <person name="Yamashita R."/>
            <person name="Nakai K."/>
            <person name="Yada T."/>
            <person name="Nakamura Y."/>
            <person name="Ohara O."/>
            <person name="Isogai T."/>
            <person name="Sugano S."/>
        </authorList>
    </citation>
    <scope>NUCLEOTIDE SEQUENCE [LARGE SCALE MRNA] (ISOFORM 4)</scope>
    <source>
        <tissue evidence="14">Spleen</tissue>
    </source>
</reference>
<reference evidence="9 12" key="5">
    <citation type="submission" date="2005-09" db="EMBL/GenBank/DDBJ databases">
        <authorList>
            <person name="Mural R.J."/>
            <person name="Istrail S."/>
            <person name="Sutton G.G."/>
            <person name="Florea L."/>
            <person name="Halpern A.L."/>
            <person name="Mobarry C.M."/>
            <person name="Lippert R."/>
            <person name="Walenz B."/>
            <person name="Shatkay H."/>
            <person name="Dew I."/>
            <person name="Miller J.R."/>
            <person name="Flanigan M.J."/>
            <person name="Edwards N.J."/>
            <person name="Bolanos R."/>
            <person name="Fasulo D."/>
            <person name="Halldorsson B.V."/>
            <person name="Hannenhalli S."/>
            <person name="Turner R."/>
            <person name="Yooseph S."/>
            <person name="Lu F."/>
            <person name="Nusskern D.R."/>
            <person name="Shue B.C."/>
            <person name="Zheng X.H."/>
            <person name="Zhong F."/>
            <person name="Delcher A.L."/>
            <person name="Huson D.H."/>
            <person name="Kravitz S.A."/>
            <person name="Mouchard L."/>
            <person name="Reinert K."/>
            <person name="Remington K.A."/>
            <person name="Clark A.G."/>
            <person name="Waterman M.S."/>
            <person name="Eichler E.E."/>
            <person name="Adams M.D."/>
            <person name="Hunkapiller M.W."/>
            <person name="Myers E.W."/>
            <person name="Venter J.C."/>
        </authorList>
    </citation>
    <scope>NUCLEOTIDE SEQUENCE [LARGE SCALE GENOMIC DNA]</scope>
</reference>
<reference evidence="9 10" key="6">
    <citation type="journal article" date="2004" name="Genome Res.">
        <title>The status, quality, and expansion of the NIH full-length cDNA project: the Mammalian Gene Collection (MGC).</title>
        <authorList>
            <consortium name="The MGC Project Team"/>
        </authorList>
    </citation>
    <scope>NUCLEOTIDE SEQUENCE [LARGE SCALE MRNA] (ISOFORM 2)</scope>
    <source>
        <tissue evidence="10">B-cell</tissue>
    </source>
</reference>
<reference evidence="9 11" key="7">
    <citation type="thesis" date="2001" institute="University of Aarhus" country="Denmark">
        <title>Translation elongation factor 1A binding protein.</title>
        <authorList>
            <person name="Mansilla F."/>
            <person name="Clark B.F.C."/>
            <person name="Knudsen C.R."/>
        </authorList>
    </citation>
    <scope>NUCLEOTIDE SEQUENCE [MRNA] (ISOFORM 2)</scope>
    <source>
        <tissue evidence="11">Skeletal muscle</tissue>
    </source>
</reference>
<evidence type="ECO:0000255" key="1"/>
<evidence type="ECO:0000255" key="2">
    <source>
        <dbReference type="PROSITE-ProRule" id="PRU00037"/>
    </source>
</evidence>
<evidence type="ECO:0000269" key="3">
    <source>
    </source>
</evidence>
<evidence type="ECO:0000269" key="4">
    <source>
    </source>
</evidence>
<evidence type="ECO:0000269" key="5">
    <source>
    </source>
</evidence>
<evidence type="ECO:0000303" key="6">
    <source>
    </source>
</evidence>
<evidence type="ECO:0000303" key="7">
    <source>
    </source>
</evidence>
<evidence type="ECO:0000303" key="8">
    <source>
    </source>
</evidence>
<evidence type="ECO:0000305" key="9"/>
<evidence type="ECO:0000312" key="10">
    <source>
        <dbReference type="EMBL" id="AAH11858.1"/>
    </source>
</evidence>
<evidence type="ECO:0000312" key="11">
    <source>
        <dbReference type="EMBL" id="AAK57478.1"/>
    </source>
</evidence>
<evidence type="ECO:0000312" key="12">
    <source>
        <dbReference type="EMBL" id="AAQ04661.1"/>
    </source>
</evidence>
<evidence type="ECO:0000312" key="13">
    <source>
        <dbReference type="EMBL" id="BAB55649.1"/>
    </source>
</evidence>
<evidence type="ECO:0000312" key="14">
    <source>
        <dbReference type="EMBL" id="BAC85392.1"/>
    </source>
</evidence>
<evidence type="ECO:0000312" key="15">
    <source>
        <dbReference type="HGNC" id="HGNC:18275"/>
    </source>
</evidence>
<evidence type="ECO:0000312" key="16">
    <source>
        <dbReference type="PIR" id="JC7326"/>
    </source>
</evidence>
<gene>
    <name evidence="15" type="primary">ABTB1</name>
    <name evidence="6" type="synonym">BPOZ</name>
    <name type="ORF">PP2259</name>
</gene>
<protein>
    <recommendedName>
        <fullName>Ankyrin repeat and BTB/POZ domain-containing protein 1</fullName>
    </recommendedName>
    <alternativeName>
        <fullName>Elongation factor 1A-binding protein</fullName>
    </alternativeName>
</protein>
<proteinExistence type="evidence at protein level"/>
<organism>
    <name type="scientific">Homo sapiens</name>
    <name type="common">Human</name>
    <dbReference type="NCBI Taxonomy" id="9606"/>
    <lineage>
        <taxon>Eukaryota</taxon>
        <taxon>Metazoa</taxon>
        <taxon>Chordata</taxon>
        <taxon>Craniata</taxon>
        <taxon>Vertebrata</taxon>
        <taxon>Euteleostomi</taxon>
        <taxon>Mammalia</taxon>
        <taxon>Eutheria</taxon>
        <taxon>Euarchontoglires</taxon>
        <taxon>Primates</taxon>
        <taxon>Haplorrhini</taxon>
        <taxon>Catarrhini</taxon>
        <taxon>Hominidae</taxon>
        <taxon>Homo</taxon>
    </lineage>
</organism>
<dbReference type="EMBL" id="AB053324">
    <property type="protein sequence ID" value="BAB55648.1"/>
    <property type="molecule type" value="mRNA"/>
</dbReference>
<dbReference type="EMBL" id="AB053325">
    <property type="protein sequence ID" value="BAB55649.1"/>
    <property type="molecule type" value="mRNA"/>
</dbReference>
<dbReference type="EMBL" id="AB053326">
    <property type="protein sequence ID" value="BAB55650.1"/>
    <property type="molecule type" value="mRNA"/>
</dbReference>
<dbReference type="EMBL" id="AF447886">
    <property type="protein sequence ID" value="AAQ04661.1"/>
    <property type="status" value="ALT_FRAME"/>
    <property type="molecule type" value="mRNA"/>
</dbReference>
<dbReference type="EMBL" id="AK130594">
    <property type="protein sequence ID" value="BAC85392.1"/>
    <property type="molecule type" value="mRNA"/>
</dbReference>
<dbReference type="EMBL" id="CH471052">
    <property type="protein sequence ID" value="EAW79333.1"/>
    <property type="molecule type" value="Genomic_DNA"/>
</dbReference>
<dbReference type="EMBL" id="CH471052">
    <property type="protein sequence ID" value="EAW79334.1"/>
    <property type="molecule type" value="Genomic_DNA"/>
</dbReference>
<dbReference type="EMBL" id="BC011858">
    <property type="protein sequence ID" value="AAH11858.1"/>
    <property type="molecule type" value="mRNA"/>
</dbReference>
<dbReference type="EMBL" id="AF297986">
    <property type="protein sequence ID" value="AAK57478.1"/>
    <property type="molecule type" value="mRNA"/>
</dbReference>
<dbReference type="CCDS" id="CCDS3045.1">
    <molecule id="Q969K4-1"/>
</dbReference>
<dbReference type="CCDS" id="CCDS46901.1">
    <molecule id="Q969K4-2"/>
</dbReference>
<dbReference type="PIR" id="JC7326">
    <property type="entry name" value="JC7326"/>
</dbReference>
<dbReference type="RefSeq" id="NP_115937.1">
    <molecule id="Q969K4-2"/>
    <property type="nucleotide sequence ID" value="NM_032548.4"/>
</dbReference>
<dbReference type="RefSeq" id="NP_742024.1">
    <molecule id="Q969K4-1"/>
    <property type="nucleotide sequence ID" value="NM_172027.3"/>
</dbReference>
<dbReference type="RefSeq" id="XP_011511515.1">
    <property type="nucleotide sequence ID" value="XM_011513213.1"/>
</dbReference>
<dbReference type="RefSeq" id="XP_016862776.1">
    <property type="nucleotide sequence ID" value="XM_017007287.1"/>
</dbReference>
<dbReference type="RefSeq" id="XP_054203996.1">
    <molecule id="Q969K4-2"/>
    <property type="nucleotide sequence ID" value="XM_054348021.1"/>
</dbReference>
<dbReference type="RefSeq" id="XP_054203997.1">
    <molecule id="Q969K4-2"/>
    <property type="nucleotide sequence ID" value="XM_054348022.1"/>
</dbReference>
<dbReference type="SMR" id="Q969K4"/>
<dbReference type="BioGRID" id="123237">
    <property type="interactions" value="18"/>
</dbReference>
<dbReference type="FunCoup" id="Q969K4">
    <property type="interactions" value="211"/>
</dbReference>
<dbReference type="IntAct" id="Q969K4">
    <property type="interactions" value="14"/>
</dbReference>
<dbReference type="MINT" id="Q969K4"/>
<dbReference type="STRING" id="9606.ENSP00000232744"/>
<dbReference type="iPTMnet" id="Q969K4"/>
<dbReference type="PhosphoSitePlus" id="Q969K4"/>
<dbReference type="BioMuta" id="ABTB1"/>
<dbReference type="DMDM" id="74751721"/>
<dbReference type="jPOST" id="Q969K4"/>
<dbReference type="MassIVE" id="Q969K4"/>
<dbReference type="PaxDb" id="9606-ENSP00000232744"/>
<dbReference type="PeptideAtlas" id="Q969K4"/>
<dbReference type="ProteomicsDB" id="75781">
    <molecule id="Q969K4-1"/>
</dbReference>
<dbReference type="ProteomicsDB" id="75782">
    <molecule id="Q969K4-2"/>
</dbReference>
<dbReference type="ProteomicsDB" id="75783">
    <molecule id="Q969K4-3"/>
</dbReference>
<dbReference type="ProteomicsDB" id="75784">
    <molecule id="Q969K4-4"/>
</dbReference>
<dbReference type="Antibodypedia" id="33153">
    <property type="antibodies" value="245 antibodies from 27 providers"/>
</dbReference>
<dbReference type="DNASU" id="80325"/>
<dbReference type="Ensembl" id="ENST00000232744.13">
    <molecule id="Q969K4-1"/>
    <property type="protein sequence ID" value="ENSP00000232744.8"/>
    <property type="gene ID" value="ENSG00000114626.18"/>
</dbReference>
<dbReference type="Ensembl" id="ENST00000453791.6">
    <molecule id="Q969K4-2"/>
    <property type="protein sequence ID" value="ENSP00000412684.2"/>
    <property type="gene ID" value="ENSG00000114626.18"/>
</dbReference>
<dbReference type="Ensembl" id="ENST00000468137.5">
    <molecule id="Q969K4-2"/>
    <property type="protein sequence ID" value="ENSP00000417366.1"/>
    <property type="gene ID" value="ENSG00000114626.18"/>
</dbReference>
<dbReference type="GeneID" id="80325"/>
<dbReference type="KEGG" id="hsa:80325"/>
<dbReference type="MANE-Select" id="ENST00000232744.13">
    <property type="protein sequence ID" value="ENSP00000232744.8"/>
    <property type="RefSeq nucleotide sequence ID" value="NM_172027.3"/>
    <property type="RefSeq protein sequence ID" value="NP_742024.1"/>
</dbReference>
<dbReference type="UCSC" id="uc003ejr.4">
    <molecule id="Q969K4-1"/>
    <property type="organism name" value="human"/>
</dbReference>
<dbReference type="AGR" id="HGNC:18275"/>
<dbReference type="CTD" id="80325"/>
<dbReference type="DisGeNET" id="80325"/>
<dbReference type="GeneCards" id="ABTB1"/>
<dbReference type="HGNC" id="HGNC:18275">
    <property type="gene designation" value="ABTB1"/>
</dbReference>
<dbReference type="HPA" id="ENSG00000114626">
    <property type="expression patterns" value="Low tissue specificity"/>
</dbReference>
<dbReference type="MIM" id="608308">
    <property type="type" value="gene"/>
</dbReference>
<dbReference type="neXtProt" id="NX_Q969K4"/>
<dbReference type="OpenTargets" id="ENSG00000114626"/>
<dbReference type="PharmGKB" id="PA24418"/>
<dbReference type="VEuPathDB" id="HostDB:ENSG00000114626"/>
<dbReference type="eggNOG" id="KOG0511">
    <property type="taxonomic scope" value="Eukaryota"/>
</dbReference>
<dbReference type="GeneTree" id="ENSGT00390000017131"/>
<dbReference type="HOGENOM" id="CLU_022885_0_0_1"/>
<dbReference type="InParanoid" id="Q969K4"/>
<dbReference type="OMA" id="EGARCIY"/>
<dbReference type="OrthoDB" id="684045at2759"/>
<dbReference type="PAN-GO" id="Q969K4">
    <property type="GO annotations" value="2 GO annotations based on evolutionary models"/>
</dbReference>
<dbReference type="PhylomeDB" id="Q969K4"/>
<dbReference type="TreeFam" id="TF329194"/>
<dbReference type="PathwayCommons" id="Q969K4"/>
<dbReference type="SignaLink" id="Q969K4"/>
<dbReference type="SIGNOR" id="Q969K4"/>
<dbReference type="BioGRID-ORCS" id="80325">
    <property type="hits" value="11 hits in 1193 CRISPR screens"/>
</dbReference>
<dbReference type="ChiTaRS" id="ABTB1">
    <property type="organism name" value="human"/>
</dbReference>
<dbReference type="GeneWiki" id="ABTB1"/>
<dbReference type="GenomeRNAi" id="80325"/>
<dbReference type="Pharos" id="Q969K4">
    <property type="development level" value="Tbio"/>
</dbReference>
<dbReference type="PRO" id="PR:Q969K4"/>
<dbReference type="Proteomes" id="UP000005640">
    <property type="component" value="Chromosome 3"/>
</dbReference>
<dbReference type="RNAct" id="Q969K4">
    <property type="molecule type" value="protein"/>
</dbReference>
<dbReference type="Bgee" id="ENSG00000114626">
    <property type="expression patterns" value="Expressed in right hemisphere of cerebellum and 169 other cell types or tissues"/>
</dbReference>
<dbReference type="ExpressionAtlas" id="Q969K4">
    <property type="expression patterns" value="baseline and differential"/>
</dbReference>
<dbReference type="GO" id="GO:0005737">
    <property type="term" value="C:cytoplasm"/>
    <property type="evidence" value="ECO:0000318"/>
    <property type="project" value="GO_Central"/>
</dbReference>
<dbReference type="GO" id="GO:0005829">
    <property type="term" value="C:cytosol"/>
    <property type="evidence" value="ECO:0000314"/>
    <property type="project" value="HPA"/>
</dbReference>
<dbReference type="GO" id="GO:0005730">
    <property type="term" value="C:nucleolus"/>
    <property type="evidence" value="ECO:0000314"/>
    <property type="project" value="HPA"/>
</dbReference>
<dbReference type="GO" id="GO:0005886">
    <property type="term" value="C:plasma membrane"/>
    <property type="evidence" value="ECO:0000314"/>
    <property type="project" value="HPA"/>
</dbReference>
<dbReference type="GO" id="GO:0000151">
    <property type="term" value="C:ubiquitin ligase complex"/>
    <property type="evidence" value="ECO:0000318"/>
    <property type="project" value="GO_Central"/>
</dbReference>
<dbReference type="GO" id="GO:0003746">
    <property type="term" value="F:translation elongation factor activity"/>
    <property type="evidence" value="ECO:0007669"/>
    <property type="project" value="UniProtKB-KW"/>
</dbReference>
<dbReference type="CDD" id="cd18497">
    <property type="entry name" value="BACK_ABTB1_BPOZ"/>
    <property type="match status" value="1"/>
</dbReference>
<dbReference type="CDD" id="cd18295">
    <property type="entry name" value="BTB1_POZ_ABTB1_BPOZ1"/>
    <property type="match status" value="1"/>
</dbReference>
<dbReference type="CDD" id="cd18296">
    <property type="entry name" value="BTB2_POZ_ABTB1_BPOZ1"/>
    <property type="match status" value="1"/>
</dbReference>
<dbReference type="FunFam" id="1.25.40.20:FF:000115">
    <property type="entry name" value="Ankyrin repeat and BTB/POZ domain-containing protein 1"/>
    <property type="match status" value="1"/>
</dbReference>
<dbReference type="FunFam" id="3.30.710.10:FF:000063">
    <property type="entry name" value="Ankyrin repeat and BTB/POZ domain-containing protein 1"/>
    <property type="match status" value="1"/>
</dbReference>
<dbReference type="FunFam" id="3.30.710.10:FF:000064">
    <property type="entry name" value="Ankyrin repeat and BTB/POZ domain-containing protein 1"/>
    <property type="match status" value="1"/>
</dbReference>
<dbReference type="Gene3D" id="1.25.40.20">
    <property type="entry name" value="Ankyrin repeat-containing domain"/>
    <property type="match status" value="1"/>
</dbReference>
<dbReference type="Gene3D" id="3.30.710.10">
    <property type="entry name" value="Potassium Channel Kv1.1, Chain A"/>
    <property type="match status" value="2"/>
</dbReference>
<dbReference type="InterPro" id="IPR044515">
    <property type="entry name" value="ABTB1"/>
</dbReference>
<dbReference type="InterPro" id="IPR002110">
    <property type="entry name" value="Ankyrin_rpt"/>
</dbReference>
<dbReference type="InterPro" id="IPR036770">
    <property type="entry name" value="Ankyrin_rpt-contain_sf"/>
</dbReference>
<dbReference type="InterPro" id="IPR000210">
    <property type="entry name" value="BTB/POZ_dom"/>
</dbReference>
<dbReference type="InterPro" id="IPR011333">
    <property type="entry name" value="SKP1/BTB/POZ_sf"/>
</dbReference>
<dbReference type="PANTHER" id="PTHR46231">
    <property type="entry name" value="ANKYRIN REPEAT AND BTB/POZ DOMAIN-CONTAINING PROTEIN 1"/>
    <property type="match status" value="1"/>
</dbReference>
<dbReference type="PANTHER" id="PTHR46231:SF1">
    <property type="entry name" value="ANKYRIN REPEAT AND BTB_POZ DOMAIN-CONTAINING PROTEIN 1"/>
    <property type="match status" value="1"/>
</dbReference>
<dbReference type="Pfam" id="PF12796">
    <property type="entry name" value="Ank_2"/>
    <property type="match status" value="1"/>
</dbReference>
<dbReference type="Pfam" id="PF00651">
    <property type="entry name" value="BTB"/>
    <property type="match status" value="2"/>
</dbReference>
<dbReference type="SMART" id="SM00248">
    <property type="entry name" value="ANK"/>
    <property type="match status" value="2"/>
</dbReference>
<dbReference type="SMART" id="SM00225">
    <property type="entry name" value="BTB"/>
    <property type="match status" value="2"/>
</dbReference>
<dbReference type="SUPFAM" id="SSF48403">
    <property type="entry name" value="Ankyrin repeat"/>
    <property type="match status" value="1"/>
</dbReference>
<dbReference type="SUPFAM" id="SSF54695">
    <property type="entry name" value="POZ domain"/>
    <property type="match status" value="2"/>
</dbReference>
<dbReference type="PROSITE" id="PS50297">
    <property type="entry name" value="ANK_REP_REGION"/>
    <property type="match status" value="1"/>
</dbReference>
<dbReference type="PROSITE" id="PS50088">
    <property type="entry name" value="ANK_REPEAT"/>
    <property type="match status" value="1"/>
</dbReference>
<dbReference type="PROSITE" id="PS50097">
    <property type="entry name" value="BTB"/>
    <property type="match status" value="2"/>
</dbReference>
<accession>Q969K4</accession>
<accession>D3DNB0</accession>
<accession>Q6ZNU9</accession>
<accession>Q71MF1</accession>
<accession>Q96S62</accession>
<accession>Q96S63</accession>